<organism>
    <name type="scientific">Homo sapiens</name>
    <name type="common">Human</name>
    <dbReference type="NCBI Taxonomy" id="9606"/>
    <lineage>
        <taxon>Eukaryota</taxon>
        <taxon>Metazoa</taxon>
        <taxon>Chordata</taxon>
        <taxon>Craniata</taxon>
        <taxon>Vertebrata</taxon>
        <taxon>Euteleostomi</taxon>
        <taxon>Mammalia</taxon>
        <taxon>Eutheria</taxon>
        <taxon>Euarchontoglires</taxon>
        <taxon>Primates</taxon>
        <taxon>Haplorrhini</taxon>
        <taxon>Catarrhini</taxon>
        <taxon>Hominidae</taxon>
        <taxon>Homo</taxon>
    </lineage>
</organism>
<evidence type="ECO:0000250" key="1"/>
<evidence type="ECO:0000255" key="2"/>
<evidence type="ECO:0000256" key="3">
    <source>
        <dbReference type="SAM" id="MobiDB-lite"/>
    </source>
</evidence>
<evidence type="ECO:0000305" key="4"/>
<comment type="function">
    <text evidence="1">May play a role in spermatogenesis.</text>
</comment>
<comment type="subcellular location">
    <subcellularLocation>
        <location evidence="4">Membrane</location>
        <topology evidence="4">Single-pass membrane protein</topology>
    </subcellularLocation>
</comment>
<comment type="similarity">
    <text evidence="4">Belongs to the SPATA31 family.</text>
</comment>
<feature type="chain" id="PRO_0000313020" description="Spermatogenesis-associated protein 31A5">
    <location>
        <begin position="1"/>
        <end position="1347"/>
    </location>
</feature>
<feature type="transmembrane region" description="Helical" evidence="2">
    <location>
        <begin position="23"/>
        <end position="43"/>
    </location>
</feature>
<feature type="region of interest" description="Disordered" evidence="3">
    <location>
        <begin position="55"/>
        <end position="87"/>
    </location>
</feature>
<feature type="region of interest" description="Disordered" evidence="3">
    <location>
        <begin position="106"/>
        <end position="233"/>
    </location>
</feature>
<feature type="region of interest" description="Disordered" evidence="3">
    <location>
        <begin position="373"/>
        <end position="397"/>
    </location>
</feature>
<feature type="region of interest" description="Disordered" evidence="3">
    <location>
        <begin position="628"/>
        <end position="657"/>
    </location>
</feature>
<feature type="region of interest" description="Disordered" evidence="3">
    <location>
        <begin position="900"/>
        <end position="955"/>
    </location>
</feature>
<feature type="region of interest" description="Disordered" evidence="3">
    <location>
        <begin position="1084"/>
        <end position="1161"/>
    </location>
</feature>
<feature type="region of interest" description="Disordered" evidence="3">
    <location>
        <begin position="1313"/>
        <end position="1335"/>
    </location>
</feature>
<feature type="compositionally biased region" description="Basic residues" evidence="3">
    <location>
        <begin position="60"/>
        <end position="82"/>
    </location>
</feature>
<feature type="compositionally biased region" description="Polar residues" evidence="3">
    <location>
        <begin position="165"/>
        <end position="178"/>
    </location>
</feature>
<feature type="compositionally biased region" description="Pro residues" evidence="3">
    <location>
        <begin position="198"/>
        <end position="211"/>
    </location>
</feature>
<feature type="compositionally biased region" description="Polar residues" evidence="3">
    <location>
        <begin position="631"/>
        <end position="651"/>
    </location>
</feature>
<feature type="compositionally biased region" description="Polar residues" evidence="3">
    <location>
        <begin position="927"/>
        <end position="948"/>
    </location>
</feature>
<feature type="compositionally biased region" description="Basic and acidic residues" evidence="3">
    <location>
        <begin position="1108"/>
        <end position="1127"/>
    </location>
</feature>
<feature type="compositionally biased region" description="Basic and acidic residues" evidence="3">
    <location>
        <begin position="1137"/>
        <end position="1146"/>
    </location>
</feature>
<keyword id="KW-0221">Differentiation</keyword>
<keyword id="KW-0472">Membrane</keyword>
<keyword id="KW-1185">Reference proteome</keyword>
<keyword id="KW-0744">Spermatogenesis</keyword>
<keyword id="KW-0812">Transmembrane</keyword>
<keyword id="KW-1133">Transmembrane helix</keyword>
<name>S31A5_HUMAN</name>
<sequence length="1347" mass="148687">MENLPFPLKLLSASSLNAPSSTPWVLDIFLTLVFALGFFFLLLPYLSYFRCDDPPSPSPGKRKCPVGRRRRPRGRMKNHSLRAGRECRRGLEETSDLLSQLQSLLGPHLDKGDFGQLSGPDPPGEVGERAPDGASQSSHEPMEDAAPILSPLASPDPQAKHPQDLASTPSPGPMTTSVSSLSASQPPEPSLPLEHPSPEPPALFPHPPHTPDPLACSLPPPKGFTAPPLRDSTLITPSHCDSVAFPLGTVPQSLSPHEDLVASVPAISGLGGSNSHVSASSRWQETARTSCAFNSSVQQDHLSRHPPETCQMEAGSLFLLSSDGQNVVGIQVTETAKVNIWEEKENVGSFTNRMTPEKHLNSLRNLAKSLDAEQDTTNPKPFWNMGENSKQLPGPQKLSDPRLWQESFWKNYSQLFWGLPSLHSESLVANAWVTDRSYTLQSPPFLFNEMSNVCPIQRETTMSPLLFQAQPLSHLGPECQPFISSTPQFRPTPMAQAEAQAHLQSSFPVLSPAFPSLIQNTGVACPASQNKVQALSLPETQHPEWPLLRRQLEGRLALPSRVQKSQDVFSVSTPNLPQESLTSILPENFPVSPELRRQLEQHIKKWIIQHWGNLGRIQESLDLMQLRDESPGTSQAKGKPSPWQSSMSTGEGSKEAQKVKFQLERDPCPHLGQILGETPQNLSRDMKSFPRKVLGVTSEELERNLRKPLRSDSGSDLLRCTERTHIENILKAHMGRNLGQTNEGLIPVCVRRSWLAVNQALPVSNTHVKTSNLAAPKSGKACVNTAQVLSFLEPCTQQGLGAHIVRFWAKHRWGLPLRVLKPIQCFKLEKVSSLSLTQLAGPSSATCESGAGSEVEVDMFLRKPPMASLRKQVLTKASDHMPESLLASSPAWKQFQRAPRGIPSWNDHEPLKPPPAGQEGRWPSKPLTYSLTGSIQQSRSLGAQSSKAGETREAVPQCRVPLETCMLANLQATSEDVHGFEAPGTSKSSLHPRVSVSQDPRKLCLMEEVVNEFEPGMATKSETQPQVCAAVVLLPDGQASVVPHASENLVSQVPQGHLQSMPTGNMRASQELHDLMAARRSKLVHEEPRNPNCQGSCKSQRPMFPPIHKSEKSRKPNLEKHEERLEGLRTPQLTPVRKTEDTHQDEGVQLLPSKKQPPSVSPFGENIKQIFQWIFSKKKSKPAPVTAESQKTVKNRSRVYSSSAEAQGLMTAVGQMLDEKMSLCHARHASKVNQHKQKFQAPVCGFPCNHRHLFYSEHGRILSYAASSQQATLKSQGCPNRDRQIRNQQPLKSVRCNNEQWGLRHPQILHPKKAVSPVSPPQHWPKTSGASSHHHHCPRHCLLWEGI</sequence>
<protein>
    <recommendedName>
        <fullName>Spermatogenesis-associated protein 31A5</fullName>
    </recommendedName>
    <alternativeName>
        <fullName>Protein FAM75A5</fullName>
    </alternativeName>
</protein>
<dbReference type="EMBL" id="AL590491">
    <property type="status" value="NOT_ANNOTATED_CDS"/>
    <property type="molecule type" value="Genomic_DNA"/>
</dbReference>
<dbReference type="CCDS" id="CCDS47970.1"/>
<dbReference type="RefSeq" id="NP_001107013.1">
    <property type="nucleotide sequence ID" value="NM_001113541.3"/>
</dbReference>
<dbReference type="SMR" id="Q5VU36"/>
<dbReference type="BioGRID" id="608345">
    <property type="interactions" value="1"/>
</dbReference>
<dbReference type="FunCoup" id="Q5VU36">
    <property type="interactions" value="1"/>
</dbReference>
<dbReference type="IntAct" id="Q5VU36">
    <property type="interactions" value="1"/>
</dbReference>
<dbReference type="iPTMnet" id="Q5VU36"/>
<dbReference type="PhosphoSitePlus" id="Q5VU36"/>
<dbReference type="BioMuta" id="SPATA31A5"/>
<dbReference type="DMDM" id="74747037"/>
<dbReference type="jPOST" id="Q5VU36"/>
<dbReference type="MassIVE" id="Q5VU36"/>
<dbReference type="PaxDb" id="9606-ENSP00000485628"/>
<dbReference type="PeptideAtlas" id="Q5VU36"/>
<dbReference type="DNASU" id="727905"/>
<dbReference type="Ensembl" id="ENST00000437823.5">
    <property type="protein sequence ID" value="ENSP00000485628.1"/>
    <property type="gene ID" value="ENSG00000276581.3"/>
</dbReference>
<dbReference type="GeneID" id="727905"/>
<dbReference type="KEGG" id="hsa:727905"/>
<dbReference type="MANE-Select" id="ENST00000437823.5">
    <property type="protein sequence ID" value="ENSP00000485628.1"/>
    <property type="RefSeq nucleotide sequence ID" value="NM_001113541.3"/>
    <property type="RefSeq protein sequence ID" value="NP_001107013.1"/>
</dbReference>
<dbReference type="UCSC" id="uc004abu.6">
    <property type="organism name" value="human"/>
</dbReference>
<dbReference type="AGR" id="HGNC:32005"/>
<dbReference type="CTD" id="727905"/>
<dbReference type="GeneCards" id="SPATA31A5"/>
<dbReference type="HGNC" id="HGNC:32005">
    <property type="gene designation" value="SPATA31A5"/>
</dbReference>
<dbReference type="HPA" id="ENSG00000276581">
    <property type="expression patterns" value="Tissue enriched (testis)"/>
</dbReference>
<dbReference type="neXtProt" id="NX_Q5VU36"/>
<dbReference type="PharmGKB" id="PA162387890"/>
<dbReference type="VEuPathDB" id="HostDB:ENSG00000276581"/>
<dbReference type="eggNOG" id="ENOG502RU0E">
    <property type="taxonomic scope" value="Eukaryota"/>
</dbReference>
<dbReference type="GeneTree" id="ENSGT00950000183043"/>
<dbReference type="HOGENOM" id="CLU_005668_2_0_1"/>
<dbReference type="InParanoid" id="Q5VU36"/>
<dbReference type="OMA" id="HGASSHI"/>
<dbReference type="OrthoDB" id="9616581at2759"/>
<dbReference type="PAN-GO" id="Q5VU36">
    <property type="GO annotations" value="0 GO annotations based on evolutionary models"/>
</dbReference>
<dbReference type="PhylomeDB" id="Q5VU36"/>
<dbReference type="TreeFam" id="TF338531"/>
<dbReference type="PathwayCommons" id="Q5VU36"/>
<dbReference type="BioGRID-ORCS" id="727905">
    <property type="hits" value="34 hits in 663 CRISPR screens"/>
</dbReference>
<dbReference type="GenomeRNAi" id="727905"/>
<dbReference type="Pharos" id="Q5VU36">
    <property type="development level" value="Tdark"/>
</dbReference>
<dbReference type="PRO" id="PR:Q5VU36"/>
<dbReference type="Proteomes" id="UP000005640">
    <property type="component" value="Chromosome 9"/>
</dbReference>
<dbReference type="RNAct" id="Q5VU36">
    <property type="molecule type" value="protein"/>
</dbReference>
<dbReference type="Bgee" id="ENSG00000276581">
    <property type="expression patterns" value="Expressed in left testis and 1 other cell type or tissue"/>
</dbReference>
<dbReference type="GO" id="GO:0016020">
    <property type="term" value="C:membrane"/>
    <property type="evidence" value="ECO:0007669"/>
    <property type="project" value="UniProtKB-SubCell"/>
</dbReference>
<dbReference type="GO" id="GO:0030154">
    <property type="term" value="P:cell differentiation"/>
    <property type="evidence" value="ECO:0007669"/>
    <property type="project" value="UniProtKB-KW"/>
</dbReference>
<dbReference type="GO" id="GO:0007283">
    <property type="term" value="P:spermatogenesis"/>
    <property type="evidence" value="ECO:0007669"/>
    <property type="project" value="UniProtKB-KW"/>
</dbReference>
<dbReference type="InterPro" id="IPR039509">
    <property type="entry name" value="SPATA31"/>
</dbReference>
<dbReference type="InterPro" id="IPR027970">
    <property type="entry name" value="SPATA31F3-like"/>
</dbReference>
<dbReference type="PANTHER" id="PTHR21859">
    <property type="entry name" value="ACROSOME-SPECIFIC PROTEIN"/>
    <property type="match status" value="1"/>
</dbReference>
<dbReference type="PANTHER" id="PTHR21859:SF55">
    <property type="entry name" value="SPERMATOGENESIS-ASSOCIATED PROTEIN 31A1-RELATED"/>
    <property type="match status" value="1"/>
</dbReference>
<dbReference type="Pfam" id="PF15371">
    <property type="entry name" value="DUF4599"/>
    <property type="match status" value="1"/>
</dbReference>
<dbReference type="Pfam" id="PF14650">
    <property type="entry name" value="FAM75"/>
    <property type="match status" value="1"/>
</dbReference>
<reference key="1">
    <citation type="journal article" date="2004" name="Nature">
        <title>DNA sequence and analysis of human chromosome 9.</title>
        <authorList>
            <person name="Humphray S.J."/>
            <person name="Oliver K."/>
            <person name="Hunt A.R."/>
            <person name="Plumb R.W."/>
            <person name="Loveland J.E."/>
            <person name="Howe K.L."/>
            <person name="Andrews T.D."/>
            <person name="Searle S."/>
            <person name="Hunt S.E."/>
            <person name="Scott C.E."/>
            <person name="Jones M.C."/>
            <person name="Ainscough R."/>
            <person name="Almeida J.P."/>
            <person name="Ambrose K.D."/>
            <person name="Ashwell R.I.S."/>
            <person name="Babbage A.K."/>
            <person name="Babbage S."/>
            <person name="Bagguley C.L."/>
            <person name="Bailey J."/>
            <person name="Banerjee R."/>
            <person name="Barker D.J."/>
            <person name="Barlow K.F."/>
            <person name="Bates K."/>
            <person name="Beasley H."/>
            <person name="Beasley O."/>
            <person name="Bird C.P."/>
            <person name="Bray-Allen S."/>
            <person name="Brown A.J."/>
            <person name="Brown J.Y."/>
            <person name="Burford D."/>
            <person name="Burrill W."/>
            <person name="Burton J."/>
            <person name="Carder C."/>
            <person name="Carter N.P."/>
            <person name="Chapman J.C."/>
            <person name="Chen Y."/>
            <person name="Clarke G."/>
            <person name="Clark S.Y."/>
            <person name="Clee C.M."/>
            <person name="Clegg S."/>
            <person name="Collier R.E."/>
            <person name="Corby N."/>
            <person name="Crosier M."/>
            <person name="Cummings A.T."/>
            <person name="Davies J."/>
            <person name="Dhami P."/>
            <person name="Dunn M."/>
            <person name="Dutta I."/>
            <person name="Dyer L.W."/>
            <person name="Earthrowl M.E."/>
            <person name="Faulkner L."/>
            <person name="Fleming C.J."/>
            <person name="Frankish A."/>
            <person name="Frankland J.A."/>
            <person name="French L."/>
            <person name="Fricker D.G."/>
            <person name="Garner P."/>
            <person name="Garnett J."/>
            <person name="Ghori J."/>
            <person name="Gilbert J.G.R."/>
            <person name="Glison C."/>
            <person name="Grafham D.V."/>
            <person name="Gribble S."/>
            <person name="Griffiths C."/>
            <person name="Griffiths-Jones S."/>
            <person name="Grocock R."/>
            <person name="Guy J."/>
            <person name="Hall R.E."/>
            <person name="Hammond S."/>
            <person name="Harley J.L."/>
            <person name="Harrison E.S.I."/>
            <person name="Hart E.A."/>
            <person name="Heath P.D."/>
            <person name="Henderson C.D."/>
            <person name="Hopkins B.L."/>
            <person name="Howard P.J."/>
            <person name="Howden P.J."/>
            <person name="Huckle E."/>
            <person name="Johnson C."/>
            <person name="Johnson D."/>
            <person name="Joy A.A."/>
            <person name="Kay M."/>
            <person name="Keenan S."/>
            <person name="Kershaw J.K."/>
            <person name="Kimberley A.M."/>
            <person name="King A."/>
            <person name="Knights A."/>
            <person name="Laird G.K."/>
            <person name="Langford C."/>
            <person name="Lawlor S."/>
            <person name="Leongamornlert D.A."/>
            <person name="Leversha M."/>
            <person name="Lloyd C."/>
            <person name="Lloyd D.M."/>
            <person name="Lovell J."/>
            <person name="Martin S."/>
            <person name="Mashreghi-Mohammadi M."/>
            <person name="Matthews L."/>
            <person name="McLaren S."/>
            <person name="McLay K.E."/>
            <person name="McMurray A."/>
            <person name="Milne S."/>
            <person name="Nickerson T."/>
            <person name="Nisbett J."/>
            <person name="Nordsiek G."/>
            <person name="Pearce A.V."/>
            <person name="Peck A.I."/>
            <person name="Porter K.M."/>
            <person name="Pandian R."/>
            <person name="Pelan S."/>
            <person name="Phillimore B."/>
            <person name="Povey S."/>
            <person name="Ramsey Y."/>
            <person name="Rand V."/>
            <person name="Scharfe M."/>
            <person name="Sehra H.K."/>
            <person name="Shownkeen R."/>
            <person name="Sims S.K."/>
            <person name="Skuce C.D."/>
            <person name="Smith M."/>
            <person name="Steward C.A."/>
            <person name="Swarbreck D."/>
            <person name="Sycamore N."/>
            <person name="Tester J."/>
            <person name="Thorpe A."/>
            <person name="Tracey A."/>
            <person name="Tromans A."/>
            <person name="Thomas D.W."/>
            <person name="Wall M."/>
            <person name="Wallis J.M."/>
            <person name="West A.P."/>
            <person name="Whitehead S.L."/>
            <person name="Willey D.L."/>
            <person name="Williams S.A."/>
            <person name="Wilming L."/>
            <person name="Wray P.W."/>
            <person name="Young L."/>
            <person name="Ashurst J.L."/>
            <person name="Coulson A."/>
            <person name="Blocker H."/>
            <person name="Durbin R.M."/>
            <person name="Sulston J.E."/>
            <person name="Hubbard T."/>
            <person name="Jackson M.J."/>
            <person name="Bentley D.R."/>
            <person name="Beck S."/>
            <person name="Rogers J."/>
            <person name="Dunham I."/>
        </authorList>
    </citation>
    <scope>NUCLEOTIDE SEQUENCE [LARGE SCALE GENOMIC DNA]</scope>
</reference>
<gene>
    <name type="primary">SPATA31A5</name>
    <name type="synonym">FAM75A5</name>
</gene>
<proteinExistence type="inferred from homology"/>
<accession>Q5VU36</accession>